<feature type="chain" id="PRO_1000018666" description="Phosphoribosylaminoimidazole-succinocarboxamide synthase">
    <location>
        <begin position="1"/>
        <end position="239"/>
    </location>
</feature>
<dbReference type="EC" id="6.3.2.6" evidence="1"/>
<dbReference type="EMBL" id="CP000001">
    <property type="protein sequence ID" value="AAU19972.1"/>
    <property type="molecule type" value="Genomic_DNA"/>
</dbReference>
<dbReference type="RefSeq" id="WP_001170542.1">
    <property type="nucleotide sequence ID" value="NZ_CP009968.1"/>
</dbReference>
<dbReference type="SMR" id="Q63GT6"/>
<dbReference type="GeneID" id="93010733"/>
<dbReference type="KEGG" id="bcz:BCE33L0266"/>
<dbReference type="PATRIC" id="fig|288681.22.peg.5344"/>
<dbReference type="UniPathway" id="UPA00074">
    <property type="reaction ID" value="UER00131"/>
</dbReference>
<dbReference type="Proteomes" id="UP000002612">
    <property type="component" value="Chromosome"/>
</dbReference>
<dbReference type="GO" id="GO:0005524">
    <property type="term" value="F:ATP binding"/>
    <property type="evidence" value="ECO:0007669"/>
    <property type="project" value="UniProtKB-KW"/>
</dbReference>
<dbReference type="GO" id="GO:0004639">
    <property type="term" value="F:phosphoribosylaminoimidazolesuccinocarboxamide synthase activity"/>
    <property type="evidence" value="ECO:0007669"/>
    <property type="project" value="UniProtKB-UniRule"/>
</dbReference>
<dbReference type="GO" id="GO:0006189">
    <property type="term" value="P:'de novo' IMP biosynthetic process"/>
    <property type="evidence" value="ECO:0007669"/>
    <property type="project" value="UniProtKB-UniRule"/>
</dbReference>
<dbReference type="GO" id="GO:0009236">
    <property type="term" value="P:cobalamin biosynthetic process"/>
    <property type="evidence" value="ECO:0007669"/>
    <property type="project" value="InterPro"/>
</dbReference>
<dbReference type="CDD" id="cd01415">
    <property type="entry name" value="SAICAR_synt_PurC"/>
    <property type="match status" value="1"/>
</dbReference>
<dbReference type="FunFam" id="3.30.200.20:FF:000189">
    <property type="entry name" value="Phosphoribosylaminoimidazole-succinocarboxamide synthase"/>
    <property type="match status" value="1"/>
</dbReference>
<dbReference type="FunFam" id="3.30.470.20:FF:000006">
    <property type="entry name" value="Phosphoribosylaminoimidazole-succinocarboxamide synthase"/>
    <property type="match status" value="1"/>
</dbReference>
<dbReference type="Gene3D" id="3.30.470.20">
    <property type="entry name" value="ATP-grasp fold, B domain"/>
    <property type="match status" value="1"/>
</dbReference>
<dbReference type="Gene3D" id="3.30.200.20">
    <property type="entry name" value="Phosphorylase Kinase, domain 1"/>
    <property type="match status" value="1"/>
</dbReference>
<dbReference type="HAMAP" id="MF_00137">
    <property type="entry name" value="SAICAR_synth"/>
    <property type="match status" value="1"/>
</dbReference>
<dbReference type="InterPro" id="IPR028923">
    <property type="entry name" value="SAICAR_synt/ADE2_N"/>
</dbReference>
<dbReference type="InterPro" id="IPR033934">
    <property type="entry name" value="SAICAR_synt_PurC"/>
</dbReference>
<dbReference type="InterPro" id="IPR001636">
    <property type="entry name" value="SAICAR_synth"/>
</dbReference>
<dbReference type="InterPro" id="IPR050089">
    <property type="entry name" value="SAICAR_synthetase"/>
</dbReference>
<dbReference type="InterPro" id="IPR018236">
    <property type="entry name" value="SAICAR_synthetase_CS"/>
</dbReference>
<dbReference type="NCBIfam" id="TIGR00081">
    <property type="entry name" value="purC"/>
    <property type="match status" value="1"/>
</dbReference>
<dbReference type="PANTHER" id="PTHR43599">
    <property type="entry name" value="MULTIFUNCTIONAL PROTEIN ADE2"/>
    <property type="match status" value="1"/>
</dbReference>
<dbReference type="PANTHER" id="PTHR43599:SF3">
    <property type="entry name" value="SI:DKEY-6E2.2"/>
    <property type="match status" value="1"/>
</dbReference>
<dbReference type="Pfam" id="PF01259">
    <property type="entry name" value="SAICAR_synt"/>
    <property type="match status" value="1"/>
</dbReference>
<dbReference type="SUPFAM" id="SSF56104">
    <property type="entry name" value="SAICAR synthase-like"/>
    <property type="match status" value="1"/>
</dbReference>
<dbReference type="PROSITE" id="PS01057">
    <property type="entry name" value="SAICAR_SYNTHETASE_1"/>
    <property type="match status" value="1"/>
</dbReference>
<dbReference type="PROSITE" id="PS01058">
    <property type="entry name" value="SAICAR_SYNTHETASE_2"/>
    <property type="match status" value="1"/>
</dbReference>
<comment type="catalytic activity">
    <reaction evidence="1">
        <text>5-amino-1-(5-phospho-D-ribosyl)imidazole-4-carboxylate + L-aspartate + ATP = (2S)-2-[5-amino-1-(5-phospho-beta-D-ribosyl)imidazole-4-carboxamido]succinate + ADP + phosphate + 2 H(+)</text>
        <dbReference type="Rhea" id="RHEA:22628"/>
        <dbReference type="ChEBI" id="CHEBI:15378"/>
        <dbReference type="ChEBI" id="CHEBI:29991"/>
        <dbReference type="ChEBI" id="CHEBI:30616"/>
        <dbReference type="ChEBI" id="CHEBI:43474"/>
        <dbReference type="ChEBI" id="CHEBI:58443"/>
        <dbReference type="ChEBI" id="CHEBI:77657"/>
        <dbReference type="ChEBI" id="CHEBI:456216"/>
        <dbReference type="EC" id="6.3.2.6"/>
    </reaction>
</comment>
<comment type="pathway">
    <text evidence="1">Purine metabolism; IMP biosynthesis via de novo pathway; 5-amino-1-(5-phospho-D-ribosyl)imidazole-4-carboxamide from 5-amino-1-(5-phospho-D-ribosyl)imidazole-4-carboxylate: step 1/2.</text>
</comment>
<comment type="similarity">
    <text evidence="1">Belongs to the SAICAR synthetase family.</text>
</comment>
<evidence type="ECO:0000255" key="1">
    <source>
        <dbReference type="HAMAP-Rule" id="MF_00137"/>
    </source>
</evidence>
<gene>
    <name evidence="1" type="primary">purC</name>
    <name type="ordered locus">BCE33L0266</name>
</gene>
<accession>Q63GT6</accession>
<keyword id="KW-0067">ATP-binding</keyword>
<keyword id="KW-0436">Ligase</keyword>
<keyword id="KW-0547">Nucleotide-binding</keyword>
<keyword id="KW-0658">Purine biosynthesis</keyword>
<reference key="1">
    <citation type="journal article" date="2006" name="J. Bacteriol.">
        <title>Pathogenomic sequence analysis of Bacillus cereus and Bacillus thuringiensis isolates closely related to Bacillus anthracis.</title>
        <authorList>
            <person name="Han C.S."/>
            <person name="Xie G."/>
            <person name="Challacombe J.F."/>
            <person name="Altherr M.R."/>
            <person name="Bhotika S.S."/>
            <person name="Bruce D."/>
            <person name="Campbell C.S."/>
            <person name="Campbell M.L."/>
            <person name="Chen J."/>
            <person name="Chertkov O."/>
            <person name="Cleland C."/>
            <person name="Dimitrijevic M."/>
            <person name="Doggett N.A."/>
            <person name="Fawcett J.J."/>
            <person name="Glavina T."/>
            <person name="Goodwin L.A."/>
            <person name="Hill K.K."/>
            <person name="Hitchcock P."/>
            <person name="Jackson P.J."/>
            <person name="Keim P."/>
            <person name="Kewalramani A.R."/>
            <person name="Longmire J."/>
            <person name="Lucas S."/>
            <person name="Malfatti S."/>
            <person name="McMurry K."/>
            <person name="Meincke L.J."/>
            <person name="Misra M."/>
            <person name="Moseman B.L."/>
            <person name="Mundt M."/>
            <person name="Munk A.C."/>
            <person name="Okinaka R.T."/>
            <person name="Parson-Quintana B."/>
            <person name="Reilly L.P."/>
            <person name="Richardson P."/>
            <person name="Robinson D.L."/>
            <person name="Rubin E."/>
            <person name="Saunders E."/>
            <person name="Tapia R."/>
            <person name="Tesmer J.G."/>
            <person name="Thayer N."/>
            <person name="Thompson L.S."/>
            <person name="Tice H."/>
            <person name="Ticknor L.O."/>
            <person name="Wills P.L."/>
            <person name="Brettin T.S."/>
            <person name="Gilna P."/>
        </authorList>
    </citation>
    <scope>NUCLEOTIDE SEQUENCE [LARGE SCALE GENOMIC DNA]</scope>
    <source>
        <strain>ZK / E33L</strain>
    </source>
</reference>
<protein>
    <recommendedName>
        <fullName evidence="1">Phosphoribosylaminoimidazole-succinocarboxamide synthase</fullName>
        <ecNumber evidence="1">6.3.2.6</ecNumber>
    </recommendedName>
    <alternativeName>
        <fullName evidence="1">SAICAR synthetase</fullName>
    </alternativeName>
</protein>
<organism>
    <name type="scientific">Bacillus cereus (strain ZK / E33L)</name>
    <dbReference type="NCBI Taxonomy" id="288681"/>
    <lineage>
        <taxon>Bacteria</taxon>
        <taxon>Bacillati</taxon>
        <taxon>Bacillota</taxon>
        <taxon>Bacilli</taxon>
        <taxon>Bacillales</taxon>
        <taxon>Bacillaceae</taxon>
        <taxon>Bacillus</taxon>
        <taxon>Bacillus cereus group</taxon>
    </lineage>
</organism>
<sequence length="239" mass="27236">MQKLELLYEGKAKRIYRTESADMVWVEYKDSATAFNGEKKETITGKGRLNNEITTLLFRKLQEVGIKTHFVEKLSETEQLVKKVSIIPLEVVTRNVIAGSLSKRLGMEEGTVLAEPIVEFYFKDDDLGDPLVTEDHIRVLNVASPEQVSVLRDMALQINQVLIDHFASCRVRLVDFKLEFGVTDEGEIILADEISPDTCRLWDETSNEKFDKDVFRRDLGNLTDAYEEILKRLGGISHV</sequence>
<name>PUR7_BACCZ</name>
<proteinExistence type="inferred from homology"/>